<gene>
    <name evidence="1" type="primary">rlmH</name>
    <name type="ordered locus">Psyr_4366</name>
</gene>
<feature type="chain" id="PRO_0000260588" description="Ribosomal RNA large subunit methyltransferase H">
    <location>
        <begin position="1"/>
        <end position="155"/>
    </location>
</feature>
<feature type="binding site" evidence="1">
    <location>
        <position position="73"/>
    </location>
    <ligand>
        <name>S-adenosyl-L-methionine</name>
        <dbReference type="ChEBI" id="CHEBI:59789"/>
    </ligand>
</feature>
<feature type="binding site" evidence="1">
    <location>
        <position position="104"/>
    </location>
    <ligand>
        <name>S-adenosyl-L-methionine</name>
        <dbReference type="ChEBI" id="CHEBI:59789"/>
    </ligand>
</feature>
<feature type="binding site" evidence="1">
    <location>
        <begin position="123"/>
        <end position="128"/>
    </location>
    <ligand>
        <name>S-adenosyl-L-methionine</name>
        <dbReference type="ChEBI" id="CHEBI:59789"/>
    </ligand>
</feature>
<name>RLMH_PSEU2</name>
<keyword id="KW-0963">Cytoplasm</keyword>
<keyword id="KW-0489">Methyltransferase</keyword>
<keyword id="KW-0698">rRNA processing</keyword>
<keyword id="KW-0949">S-adenosyl-L-methionine</keyword>
<keyword id="KW-0808">Transferase</keyword>
<dbReference type="EC" id="2.1.1.177" evidence="1"/>
<dbReference type="EMBL" id="CP000075">
    <property type="protein sequence ID" value="AAY39396.1"/>
    <property type="molecule type" value="Genomic_DNA"/>
</dbReference>
<dbReference type="RefSeq" id="WP_003313894.1">
    <property type="nucleotide sequence ID" value="NC_007005.1"/>
</dbReference>
<dbReference type="RefSeq" id="YP_237434.1">
    <property type="nucleotide sequence ID" value="NC_007005.1"/>
</dbReference>
<dbReference type="SMR" id="Q4ZN76"/>
<dbReference type="STRING" id="205918.Psyr_4366"/>
<dbReference type="GeneID" id="77280210"/>
<dbReference type="KEGG" id="psb:Psyr_4366"/>
<dbReference type="PATRIC" id="fig|205918.7.peg.4507"/>
<dbReference type="eggNOG" id="COG1576">
    <property type="taxonomic scope" value="Bacteria"/>
</dbReference>
<dbReference type="HOGENOM" id="CLU_100552_1_0_6"/>
<dbReference type="OrthoDB" id="9806643at2"/>
<dbReference type="Proteomes" id="UP000000426">
    <property type="component" value="Chromosome"/>
</dbReference>
<dbReference type="GO" id="GO:0005737">
    <property type="term" value="C:cytoplasm"/>
    <property type="evidence" value="ECO:0007669"/>
    <property type="project" value="UniProtKB-SubCell"/>
</dbReference>
<dbReference type="GO" id="GO:0070038">
    <property type="term" value="F:rRNA (pseudouridine-N3-)-methyltransferase activity"/>
    <property type="evidence" value="ECO:0007669"/>
    <property type="project" value="UniProtKB-UniRule"/>
</dbReference>
<dbReference type="CDD" id="cd18081">
    <property type="entry name" value="RlmH-like"/>
    <property type="match status" value="1"/>
</dbReference>
<dbReference type="Gene3D" id="3.40.1280.10">
    <property type="match status" value="1"/>
</dbReference>
<dbReference type="HAMAP" id="MF_00658">
    <property type="entry name" value="23SrRNA_methyltr_H"/>
    <property type="match status" value="1"/>
</dbReference>
<dbReference type="InterPro" id="IPR029028">
    <property type="entry name" value="Alpha/beta_knot_MTases"/>
</dbReference>
<dbReference type="InterPro" id="IPR003742">
    <property type="entry name" value="RlmH-like"/>
</dbReference>
<dbReference type="InterPro" id="IPR029026">
    <property type="entry name" value="tRNA_m1G_MTases_N"/>
</dbReference>
<dbReference type="NCBIfam" id="NF000986">
    <property type="entry name" value="PRK00103.1-4"/>
    <property type="match status" value="1"/>
</dbReference>
<dbReference type="NCBIfam" id="TIGR00246">
    <property type="entry name" value="tRNA_RlmH_YbeA"/>
    <property type="match status" value="1"/>
</dbReference>
<dbReference type="PANTHER" id="PTHR33603">
    <property type="entry name" value="METHYLTRANSFERASE"/>
    <property type="match status" value="1"/>
</dbReference>
<dbReference type="PANTHER" id="PTHR33603:SF1">
    <property type="entry name" value="RIBOSOMAL RNA LARGE SUBUNIT METHYLTRANSFERASE H"/>
    <property type="match status" value="1"/>
</dbReference>
<dbReference type="Pfam" id="PF02590">
    <property type="entry name" value="SPOUT_MTase"/>
    <property type="match status" value="1"/>
</dbReference>
<dbReference type="PIRSF" id="PIRSF004505">
    <property type="entry name" value="MT_bac"/>
    <property type="match status" value="1"/>
</dbReference>
<dbReference type="SUPFAM" id="SSF75217">
    <property type="entry name" value="alpha/beta knot"/>
    <property type="match status" value="1"/>
</dbReference>
<accession>Q4ZN76</accession>
<evidence type="ECO:0000255" key="1">
    <source>
        <dbReference type="HAMAP-Rule" id="MF_00658"/>
    </source>
</evidence>
<organism>
    <name type="scientific">Pseudomonas syringae pv. syringae (strain B728a)</name>
    <dbReference type="NCBI Taxonomy" id="205918"/>
    <lineage>
        <taxon>Bacteria</taxon>
        <taxon>Pseudomonadati</taxon>
        <taxon>Pseudomonadota</taxon>
        <taxon>Gammaproteobacteria</taxon>
        <taxon>Pseudomonadales</taxon>
        <taxon>Pseudomonadaceae</taxon>
        <taxon>Pseudomonas</taxon>
        <taxon>Pseudomonas syringae</taxon>
    </lineage>
</organism>
<proteinExistence type="inferred from homology"/>
<comment type="function">
    <text evidence="1">Specifically methylates the pseudouridine at position 1915 (m3Psi1915) in 23S rRNA.</text>
</comment>
<comment type="catalytic activity">
    <reaction evidence="1">
        <text>pseudouridine(1915) in 23S rRNA + S-adenosyl-L-methionine = N(3)-methylpseudouridine(1915) in 23S rRNA + S-adenosyl-L-homocysteine + H(+)</text>
        <dbReference type="Rhea" id="RHEA:42752"/>
        <dbReference type="Rhea" id="RHEA-COMP:10221"/>
        <dbReference type="Rhea" id="RHEA-COMP:10222"/>
        <dbReference type="ChEBI" id="CHEBI:15378"/>
        <dbReference type="ChEBI" id="CHEBI:57856"/>
        <dbReference type="ChEBI" id="CHEBI:59789"/>
        <dbReference type="ChEBI" id="CHEBI:65314"/>
        <dbReference type="ChEBI" id="CHEBI:74486"/>
        <dbReference type="EC" id="2.1.1.177"/>
    </reaction>
</comment>
<comment type="subunit">
    <text evidence="1">Homodimer.</text>
</comment>
<comment type="subcellular location">
    <subcellularLocation>
        <location evidence="1">Cytoplasm</location>
    </subcellularLocation>
</comment>
<comment type="similarity">
    <text evidence="1">Belongs to the RNA methyltransferase RlmH family.</text>
</comment>
<sequence>MRLRLIAVGSRMPKWVEEGWHEYAKRMPSELALELVEIPLNTRGKNADVARFIRQEGEAMLAKVQPGERIVTLEVQGKPWSTEQLAVELDRWRLDARTVNLMVGGPEGLAPEVCARSEQRWSLSPLTLPHPLVRILIGEQMYRAWTVLSGHPYHK</sequence>
<reference key="1">
    <citation type="journal article" date="2005" name="Proc. Natl. Acad. Sci. U.S.A.">
        <title>Comparison of the complete genome sequences of Pseudomonas syringae pv. syringae B728a and pv. tomato DC3000.</title>
        <authorList>
            <person name="Feil H."/>
            <person name="Feil W.S."/>
            <person name="Chain P."/>
            <person name="Larimer F."/>
            <person name="Dibartolo G."/>
            <person name="Copeland A."/>
            <person name="Lykidis A."/>
            <person name="Trong S."/>
            <person name="Nolan M."/>
            <person name="Goltsman E."/>
            <person name="Thiel J."/>
            <person name="Malfatti S."/>
            <person name="Loper J.E."/>
            <person name="Lapidus A."/>
            <person name="Detter J.C."/>
            <person name="Land M."/>
            <person name="Richardson P.M."/>
            <person name="Kyrpides N.C."/>
            <person name="Ivanova N."/>
            <person name="Lindow S.E."/>
        </authorList>
    </citation>
    <scope>NUCLEOTIDE SEQUENCE [LARGE SCALE GENOMIC DNA]</scope>
    <source>
        <strain>B728a</strain>
    </source>
</reference>
<protein>
    <recommendedName>
        <fullName evidence="1">Ribosomal RNA large subunit methyltransferase H</fullName>
        <ecNumber evidence="1">2.1.1.177</ecNumber>
    </recommendedName>
    <alternativeName>
        <fullName evidence="1">23S rRNA (pseudouridine1915-N3)-methyltransferase</fullName>
    </alternativeName>
    <alternativeName>
        <fullName evidence="1">23S rRNA m3Psi1915 methyltransferase</fullName>
    </alternativeName>
    <alternativeName>
        <fullName evidence="1">rRNA (pseudouridine-N3-)-methyltransferase RlmH</fullName>
    </alternativeName>
</protein>